<accession>B1LWT1</accession>
<gene>
    <name evidence="1" type="primary">rplV</name>
    <name type="ordered locus">Mrad2831_2223</name>
</gene>
<comment type="function">
    <text evidence="1">This protein binds specifically to 23S rRNA; its binding is stimulated by other ribosomal proteins, e.g. L4, L17, and L20. It is important during the early stages of 50S assembly. It makes multiple contacts with different domains of the 23S rRNA in the assembled 50S subunit and ribosome (By similarity).</text>
</comment>
<comment type="function">
    <text evidence="1">The globular domain of the protein is located near the polypeptide exit tunnel on the outside of the subunit, while an extended beta-hairpin is found that lines the wall of the exit tunnel in the center of the 70S ribosome.</text>
</comment>
<comment type="subunit">
    <text evidence="1">Part of the 50S ribosomal subunit.</text>
</comment>
<comment type="similarity">
    <text evidence="1">Belongs to the universal ribosomal protein uL22 family.</text>
</comment>
<evidence type="ECO:0000255" key="1">
    <source>
        <dbReference type="HAMAP-Rule" id="MF_01331"/>
    </source>
</evidence>
<evidence type="ECO:0000305" key="2"/>
<sequence>MGKQATPRALPENEAKAVARMLRVSPQKLNLVAQMIRGKKVDTALAELQFSRKRISTEVKKCLESAIANAENNHDLDVDDLVVSQAFVGKALVLKRFHARARGRGARILKPFSNLTIVVREVRQAEAA</sequence>
<dbReference type="EMBL" id="CP001001">
    <property type="protein sequence ID" value="ACB24218.1"/>
    <property type="molecule type" value="Genomic_DNA"/>
</dbReference>
<dbReference type="RefSeq" id="WP_012319191.1">
    <property type="nucleotide sequence ID" value="NC_010505.1"/>
</dbReference>
<dbReference type="SMR" id="B1LWT1"/>
<dbReference type="STRING" id="426355.Mrad2831_2223"/>
<dbReference type="GeneID" id="96606921"/>
<dbReference type="KEGG" id="mrd:Mrad2831_2223"/>
<dbReference type="eggNOG" id="COG0091">
    <property type="taxonomic scope" value="Bacteria"/>
</dbReference>
<dbReference type="HOGENOM" id="CLU_083987_3_0_5"/>
<dbReference type="OrthoDB" id="9805969at2"/>
<dbReference type="Proteomes" id="UP000006589">
    <property type="component" value="Chromosome"/>
</dbReference>
<dbReference type="GO" id="GO:0022625">
    <property type="term" value="C:cytosolic large ribosomal subunit"/>
    <property type="evidence" value="ECO:0007669"/>
    <property type="project" value="TreeGrafter"/>
</dbReference>
<dbReference type="GO" id="GO:0019843">
    <property type="term" value="F:rRNA binding"/>
    <property type="evidence" value="ECO:0007669"/>
    <property type="project" value="UniProtKB-UniRule"/>
</dbReference>
<dbReference type="GO" id="GO:0003735">
    <property type="term" value="F:structural constituent of ribosome"/>
    <property type="evidence" value="ECO:0007669"/>
    <property type="project" value="InterPro"/>
</dbReference>
<dbReference type="GO" id="GO:0006412">
    <property type="term" value="P:translation"/>
    <property type="evidence" value="ECO:0007669"/>
    <property type="project" value="UniProtKB-UniRule"/>
</dbReference>
<dbReference type="CDD" id="cd00336">
    <property type="entry name" value="Ribosomal_L22"/>
    <property type="match status" value="1"/>
</dbReference>
<dbReference type="Gene3D" id="3.90.470.10">
    <property type="entry name" value="Ribosomal protein L22/L17"/>
    <property type="match status" value="1"/>
</dbReference>
<dbReference type="HAMAP" id="MF_01331_B">
    <property type="entry name" value="Ribosomal_uL22_B"/>
    <property type="match status" value="1"/>
</dbReference>
<dbReference type="InterPro" id="IPR001063">
    <property type="entry name" value="Ribosomal_uL22"/>
</dbReference>
<dbReference type="InterPro" id="IPR005727">
    <property type="entry name" value="Ribosomal_uL22_bac/chlpt-type"/>
</dbReference>
<dbReference type="InterPro" id="IPR047867">
    <property type="entry name" value="Ribosomal_uL22_bac/org-type"/>
</dbReference>
<dbReference type="InterPro" id="IPR018260">
    <property type="entry name" value="Ribosomal_uL22_CS"/>
</dbReference>
<dbReference type="InterPro" id="IPR036394">
    <property type="entry name" value="Ribosomal_uL22_sf"/>
</dbReference>
<dbReference type="NCBIfam" id="TIGR01044">
    <property type="entry name" value="rplV_bact"/>
    <property type="match status" value="1"/>
</dbReference>
<dbReference type="PANTHER" id="PTHR13501">
    <property type="entry name" value="CHLOROPLAST 50S RIBOSOMAL PROTEIN L22-RELATED"/>
    <property type="match status" value="1"/>
</dbReference>
<dbReference type="PANTHER" id="PTHR13501:SF8">
    <property type="entry name" value="LARGE RIBOSOMAL SUBUNIT PROTEIN UL22M"/>
    <property type="match status" value="1"/>
</dbReference>
<dbReference type="Pfam" id="PF00237">
    <property type="entry name" value="Ribosomal_L22"/>
    <property type="match status" value="1"/>
</dbReference>
<dbReference type="SUPFAM" id="SSF54843">
    <property type="entry name" value="Ribosomal protein L22"/>
    <property type="match status" value="1"/>
</dbReference>
<dbReference type="PROSITE" id="PS00464">
    <property type="entry name" value="RIBOSOMAL_L22"/>
    <property type="match status" value="1"/>
</dbReference>
<protein>
    <recommendedName>
        <fullName evidence="1">Large ribosomal subunit protein uL22</fullName>
    </recommendedName>
    <alternativeName>
        <fullName evidence="2">50S ribosomal protein L22</fullName>
    </alternativeName>
</protein>
<keyword id="KW-0687">Ribonucleoprotein</keyword>
<keyword id="KW-0689">Ribosomal protein</keyword>
<keyword id="KW-0694">RNA-binding</keyword>
<keyword id="KW-0699">rRNA-binding</keyword>
<reference key="1">
    <citation type="submission" date="2008-03" db="EMBL/GenBank/DDBJ databases">
        <title>Complete sequence of chromosome of Methylobacterium radiotolerans JCM 2831.</title>
        <authorList>
            <consortium name="US DOE Joint Genome Institute"/>
            <person name="Copeland A."/>
            <person name="Lucas S."/>
            <person name="Lapidus A."/>
            <person name="Glavina del Rio T."/>
            <person name="Dalin E."/>
            <person name="Tice H."/>
            <person name="Bruce D."/>
            <person name="Goodwin L."/>
            <person name="Pitluck S."/>
            <person name="Kiss H."/>
            <person name="Brettin T."/>
            <person name="Detter J.C."/>
            <person name="Han C."/>
            <person name="Kuske C.R."/>
            <person name="Schmutz J."/>
            <person name="Larimer F."/>
            <person name="Land M."/>
            <person name="Hauser L."/>
            <person name="Kyrpides N."/>
            <person name="Mikhailova N."/>
            <person name="Marx C.J."/>
            <person name="Richardson P."/>
        </authorList>
    </citation>
    <scope>NUCLEOTIDE SEQUENCE [LARGE SCALE GENOMIC DNA]</scope>
    <source>
        <strain>ATCC 27329 / DSM 1819 / JCM 2831 / NBRC 15690 / NCIMB 10815 / 0-1</strain>
    </source>
</reference>
<name>RL22_METRJ</name>
<feature type="chain" id="PRO_1000142283" description="Large ribosomal subunit protein uL22">
    <location>
        <begin position="1"/>
        <end position="128"/>
    </location>
</feature>
<proteinExistence type="inferred from homology"/>
<organism>
    <name type="scientific">Methylobacterium radiotolerans (strain ATCC 27329 / DSM 1819 / JCM 2831 / NBRC 15690 / NCIMB 10815 / 0-1)</name>
    <dbReference type="NCBI Taxonomy" id="426355"/>
    <lineage>
        <taxon>Bacteria</taxon>
        <taxon>Pseudomonadati</taxon>
        <taxon>Pseudomonadota</taxon>
        <taxon>Alphaproteobacteria</taxon>
        <taxon>Hyphomicrobiales</taxon>
        <taxon>Methylobacteriaceae</taxon>
        <taxon>Methylobacterium</taxon>
    </lineage>
</organism>